<evidence type="ECO:0000255" key="1">
    <source>
        <dbReference type="HAMAP-Rule" id="MF_01314"/>
    </source>
</evidence>
<organism>
    <name type="scientific">Aeromonas hydrophila subsp. hydrophila (strain ATCC 7966 / DSM 30187 / BCRC 13018 / CCUG 14551 / JCM 1027 / KCTC 2358 / NCIMB 9240 / NCTC 8049)</name>
    <dbReference type="NCBI Taxonomy" id="380703"/>
    <lineage>
        <taxon>Bacteria</taxon>
        <taxon>Pseudomonadati</taxon>
        <taxon>Pseudomonadota</taxon>
        <taxon>Gammaproteobacteria</taxon>
        <taxon>Aeromonadales</taxon>
        <taxon>Aeromonadaceae</taxon>
        <taxon>Aeromonas</taxon>
    </lineage>
</organism>
<accession>A0KEJ0</accession>
<name>NORR_AERHH</name>
<dbReference type="EMBL" id="CP000462">
    <property type="protein sequence ID" value="ABK35919.1"/>
    <property type="molecule type" value="Genomic_DNA"/>
</dbReference>
<dbReference type="RefSeq" id="WP_011704146.1">
    <property type="nucleotide sequence ID" value="NC_008570.1"/>
</dbReference>
<dbReference type="RefSeq" id="YP_854649.1">
    <property type="nucleotide sequence ID" value="NC_008570.1"/>
</dbReference>
<dbReference type="SMR" id="A0KEJ0"/>
<dbReference type="STRING" id="380703.AHA_0118"/>
<dbReference type="EnsemblBacteria" id="ABK35919">
    <property type="protein sequence ID" value="ABK35919"/>
    <property type="gene ID" value="AHA_0118"/>
</dbReference>
<dbReference type="GeneID" id="4487498"/>
<dbReference type="KEGG" id="aha:AHA_0118"/>
<dbReference type="PATRIC" id="fig|380703.7.peg.111"/>
<dbReference type="eggNOG" id="COG3604">
    <property type="taxonomic scope" value="Bacteria"/>
</dbReference>
<dbReference type="HOGENOM" id="CLU_000445_125_0_6"/>
<dbReference type="OrthoDB" id="9804019at2"/>
<dbReference type="UniPathway" id="UPA00638"/>
<dbReference type="Proteomes" id="UP000000756">
    <property type="component" value="Chromosome"/>
</dbReference>
<dbReference type="GO" id="GO:0005524">
    <property type="term" value="F:ATP binding"/>
    <property type="evidence" value="ECO:0007669"/>
    <property type="project" value="UniProtKB-UniRule"/>
</dbReference>
<dbReference type="GO" id="GO:0016887">
    <property type="term" value="F:ATP hydrolysis activity"/>
    <property type="evidence" value="ECO:0007669"/>
    <property type="project" value="InterPro"/>
</dbReference>
<dbReference type="GO" id="GO:0003677">
    <property type="term" value="F:DNA binding"/>
    <property type="evidence" value="ECO:0007669"/>
    <property type="project" value="UniProtKB-KW"/>
</dbReference>
<dbReference type="GO" id="GO:0003700">
    <property type="term" value="F:DNA-binding transcription factor activity"/>
    <property type="evidence" value="ECO:0007669"/>
    <property type="project" value="UniProtKB-UniRule"/>
</dbReference>
<dbReference type="GO" id="GO:0000160">
    <property type="term" value="P:phosphorelay signal transduction system"/>
    <property type="evidence" value="ECO:0007669"/>
    <property type="project" value="UniProtKB-UniRule"/>
</dbReference>
<dbReference type="CDD" id="cd00009">
    <property type="entry name" value="AAA"/>
    <property type="match status" value="1"/>
</dbReference>
<dbReference type="FunFam" id="3.40.50.300:FF:000006">
    <property type="entry name" value="DNA-binding transcriptional regulator NtrC"/>
    <property type="match status" value="1"/>
</dbReference>
<dbReference type="Gene3D" id="1.10.8.60">
    <property type="match status" value="1"/>
</dbReference>
<dbReference type="Gene3D" id="3.30.450.40">
    <property type="match status" value="1"/>
</dbReference>
<dbReference type="Gene3D" id="1.10.10.60">
    <property type="entry name" value="Homeodomain-like"/>
    <property type="match status" value="1"/>
</dbReference>
<dbReference type="Gene3D" id="3.40.50.300">
    <property type="entry name" value="P-loop containing nucleotide triphosphate hydrolases"/>
    <property type="match status" value="1"/>
</dbReference>
<dbReference type="HAMAP" id="MF_01314">
    <property type="entry name" value="NorR"/>
    <property type="match status" value="1"/>
</dbReference>
<dbReference type="InterPro" id="IPR003593">
    <property type="entry name" value="AAA+_ATPase"/>
</dbReference>
<dbReference type="InterPro" id="IPR003018">
    <property type="entry name" value="GAF"/>
</dbReference>
<dbReference type="InterPro" id="IPR029016">
    <property type="entry name" value="GAF-like_dom_sf"/>
</dbReference>
<dbReference type="InterPro" id="IPR009057">
    <property type="entry name" value="Homeodomain-like_sf"/>
</dbReference>
<dbReference type="InterPro" id="IPR023944">
    <property type="entry name" value="NorR"/>
</dbReference>
<dbReference type="InterPro" id="IPR027417">
    <property type="entry name" value="P-loop_NTPase"/>
</dbReference>
<dbReference type="InterPro" id="IPR002078">
    <property type="entry name" value="Sigma_54_int"/>
</dbReference>
<dbReference type="InterPro" id="IPR025662">
    <property type="entry name" value="Sigma_54_int_dom_ATP-bd_1"/>
</dbReference>
<dbReference type="InterPro" id="IPR025944">
    <property type="entry name" value="Sigma_54_int_dom_CS"/>
</dbReference>
<dbReference type="NCBIfam" id="NF003451">
    <property type="entry name" value="PRK05022.1"/>
    <property type="match status" value="1"/>
</dbReference>
<dbReference type="PANTHER" id="PTHR32071:SF35">
    <property type="entry name" value="ANAEROBIC NITRIC OXIDE REDUCTASE TRANSCRIPTION REGULATOR NORR"/>
    <property type="match status" value="1"/>
</dbReference>
<dbReference type="PANTHER" id="PTHR32071">
    <property type="entry name" value="TRANSCRIPTIONAL REGULATORY PROTEIN"/>
    <property type="match status" value="1"/>
</dbReference>
<dbReference type="Pfam" id="PF01590">
    <property type="entry name" value="GAF"/>
    <property type="match status" value="1"/>
</dbReference>
<dbReference type="Pfam" id="PF00158">
    <property type="entry name" value="Sigma54_activat"/>
    <property type="match status" value="1"/>
</dbReference>
<dbReference type="SMART" id="SM00382">
    <property type="entry name" value="AAA"/>
    <property type="match status" value="1"/>
</dbReference>
<dbReference type="SMART" id="SM00065">
    <property type="entry name" value="GAF"/>
    <property type="match status" value="1"/>
</dbReference>
<dbReference type="SUPFAM" id="SSF55781">
    <property type="entry name" value="GAF domain-like"/>
    <property type="match status" value="1"/>
</dbReference>
<dbReference type="SUPFAM" id="SSF46689">
    <property type="entry name" value="Homeodomain-like"/>
    <property type="match status" value="1"/>
</dbReference>
<dbReference type="SUPFAM" id="SSF52540">
    <property type="entry name" value="P-loop containing nucleoside triphosphate hydrolases"/>
    <property type="match status" value="1"/>
</dbReference>
<dbReference type="PROSITE" id="PS00675">
    <property type="entry name" value="SIGMA54_INTERACT_1"/>
    <property type="match status" value="1"/>
</dbReference>
<dbReference type="PROSITE" id="PS00688">
    <property type="entry name" value="SIGMA54_INTERACT_3"/>
    <property type="match status" value="1"/>
</dbReference>
<dbReference type="PROSITE" id="PS50045">
    <property type="entry name" value="SIGMA54_INTERACT_4"/>
    <property type="match status" value="1"/>
</dbReference>
<sequence length="508" mass="55065">MISTDSLARIALDLQLGISHQDRFHRLIQSVRSLLNSDASALLRYEGGQFIPLAIDGLMQDVLGRRFALKDHPRMEAIARAGDVVRFPADSSLPDPYDGLLPDHDDFKVHACVGLPLFSDQALIGALTIDGMNPTQFDAISDEELRLVGALAAAALNNALLLERLARQSSEPLVPGTRPGPEQPEMIGQSPAMARLRHEIEVVANSELNVLILGETGVGKELIAKAVHRGSQRAKAPLVYLNCAALPESVAESELFGHVKGAFTGAIHNRAGKFELADQGTLFLDEIGELSLPLQAKLLRVLQYGDLQRIGDDTPLKVNVRILAATNRDLKQAVVEGQFRADLYHRLSVFPIHAPALRERPGDIPLLAGYFCERCRLSLGLEQLRIQPQALQLLERHDWPGNVRELEHAIHRAAVLARAEQGSQTPTLASHHFNLAAGPLPPSTSPAMAPMTPLPGGLGLRAATDAFQLALIEQTLAAHNGNWAATARALELDSGNLHRLAKRLGLKA</sequence>
<comment type="function">
    <text evidence="1">Required for the expression of anaerobic nitric oxide (NO) reductase, acts as a transcriptional activator for at least the norVW operon. Activation also requires sigma-54.</text>
</comment>
<comment type="pathway">
    <text evidence="1">Nitrogen metabolism; nitric oxide reduction.</text>
</comment>
<keyword id="KW-0067">ATP-binding</keyword>
<keyword id="KW-0238">DNA-binding</keyword>
<keyword id="KW-0547">Nucleotide-binding</keyword>
<keyword id="KW-0597">Phosphoprotein</keyword>
<keyword id="KW-1185">Reference proteome</keyword>
<keyword id="KW-0804">Transcription</keyword>
<keyword id="KW-0805">Transcription regulation</keyword>
<proteinExistence type="inferred from homology"/>
<protein>
    <recommendedName>
        <fullName evidence="1">Anaerobic nitric oxide reductase transcription regulator NorR</fullName>
    </recommendedName>
</protein>
<reference key="1">
    <citation type="journal article" date="2006" name="J. Bacteriol.">
        <title>Genome sequence of Aeromonas hydrophila ATCC 7966T: jack of all trades.</title>
        <authorList>
            <person name="Seshadri R."/>
            <person name="Joseph S.W."/>
            <person name="Chopra A.K."/>
            <person name="Sha J."/>
            <person name="Shaw J."/>
            <person name="Graf J."/>
            <person name="Haft D.H."/>
            <person name="Wu M."/>
            <person name="Ren Q."/>
            <person name="Rosovitz M.J."/>
            <person name="Madupu R."/>
            <person name="Tallon L."/>
            <person name="Kim M."/>
            <person name="Jin S."/>
            <person name="Vuong H."/>
            <person name="Stine O.C."/>
            <person name="Ali A."/>
            <person name="Horneman A.J."/>
            <person name="Heidelberg J.F."/>
        </authorList>
    </citation>
    <scope>NUCLEOTIDE SEQUENCE [LARGE SCALE GENOMIC DNA]</scope>
    <source>
        <strain>ATCC 7966 / DSM 30187 / BCRC 13018 / CCUG 14551 / JCM 1027 / KCTC 2358 / NCIMB 9240 / NCTC 8049</strain>
    </source>
</reference>
<feature type="chain" id="PRO_0000305616" description="Anaerobic nitric oxide reductase transcription regulator NorR">
    <location>
        <begin position="1"/>
        <end position="508"/>
    </location>
</feature>
<feature type="domain" description="Sigma-54 factor interaction" evidence="1">
    <location>
        <begin position="186"/>
        <end position="415"/>
    </location>
</feature>
<feature type="DNA-binding region" description="H-T-H motif" evidence="1">
    <location>
        <begin position="483"/>
        <end position="502"/>
    </location>
</feature>
<feature type="binding site" evidence="1">
    <location>
        <begin position="214"/>
        <end position="221"/>
    </location>
    <ligand>
        <name>ATP</name>
        <dbReference type="ChEBI" id="CHEBI:30616"/>
    </ligand>
</feature>
<feature type="binding site" evidence="1">
    <location>
        <begin position="277"/>
        <end position="286"/>
    </location>
    <ligand>
        <name>ATP</name>
        <dbReference type="ChEBI" id="CHEBI:30616"/>
    </ligand>
</feature>
<feature type="modified residue" description="4-aspartylphosphate" evidence="1">
    <location>
        <position position="56"/>
    </location>
</feature>
<gene>
    <name evidence="1" type="primary">norR</name>
    <name type="ordered locus">AHA_0118</name>
</gene>